<organism>
    <name type="scientific">Listeria innocua serovar 6a (strain ATCC BAA-680 / CLIP 11262)</name>
    <dbReference type="NCBI Taxonomy" id="272626"/>
    <lineage>
        <taxon>Bacteria</taxon>
        <taxon>Bacillati</taxon>
        <taxon>Bacillota</taxon>
        <taxon>Bacilli</taxon>
        <taxon>Bacillales</taxon>
        <taxon>Listeriaceae</taxon>
        <taxon>Listeria</taxon>
    </lineage>
</organism>
<proteinExistence type="evidence at transcript level"/>
<reference key="1">
    <citation type="journal article" date="2001" name="Science">
        <title>Comparative genomics of Listeria species.</title>
        <authorList>
            <person name="Glaser P."/>
            <person name="Frangeul L."/>
            <person name="Buchrieser C."/>
            <person name="Rusniok C."/>
            <person name="Amend A."/>
            <person name="Baquero F."/>
            <person name="Berche P."/>
            <person name="Bloecker H."/>
            <person name="Brandt P."/>
            <person name="Chakraborty T."/>
            <person name="Charbit A."/>
            <person name="Chetouani F."/>
            <person name="Couve E."/>
            <person name="de Daruvar A."/>
            <person name="Dehoux P."/>
            <person name="Domann E."/>
            <person name="Dominguez-Bernal G."/>
            <person name="Duchaud E."/>
            <person name="Durant L."/>
            <person name="Dussurget O."/>
            <person name="Entian K.-D."/>
            <person name="Fsihi H."/>
            <person name="Garcia-del Portillo F."/>
            <person name="Garrido P."/>
            <person name="Gautier L."/>
            <person name="Goebel W."/>
            <person name="Gomez-Lopez N."/>
            <person name="Hain T."/>
            <person name="Hauf J."/>
            <person name="Jackson D."/>
            <person name="Jones L.-M."/>
            <person name="Kaerst U."/>
            <person name="Kreft J."/>
            <person name="Kuhn M."/>
            <person name="Kunst F."/>
            <person name="Kurapkat G."/>
            <person name="Madueno E."/>
            <person name="Maitournam A."/>
            <person name="Mata Vicente J."/>
            <person name="Ng E."/>
            <person name="Nedjari H."/>
            <person name="Nordsiek G."/>
            <person name="Novella S."/>
            <person name="de Pablos B."/>
            <person name="Perez-Diaz J.-C."/>
            <person name="Purcell R."/>
            <person name="Remmel B."/>
            <person name="Rose M."/>
            <person name="Schlueter T."/>
            <person name="Simoes N."/>
            <person name="Tierrez A."/>
            <person name="Vazquez-Boland J.-A."/>
            <person name="Voss H."/>
            <person name="Wehland J."/>
            <person name="Cossart P."/>
        </authorList>
    </citation>
    <scope>NUCLEOTIDE SEQUENCE [LARGE SCALE GENOMIC DNA]</scope>
    <source>
        <strain>ATCC BAA-680 / CLIP 11262</strain>
    </source>
</reference>
<reference key="2">
    <citation type="journal article" date="2012" name="J. Bacteriol.">
        <title>Novel listerial glycerol dehydrogenase- and phosphoenolpyruvate-dependent dihydroxyacetone kinase system connected to the pentose phosphate pathway.</title>
        <authorList>
            <person name="Monniot C."/>
            <person name="Zebre A.C."/>
            <person name="Ake F.M."/>
            <person name="Deutscher J."/>
            <person name="Milohanic E."/>
        </authorList>
    </citation>
    <scope>FUNCTION</scope>
    <scope>INDUCTION</scope>
    <source>
        <strain>ATCC BAA-680 / CLIP 11262</strain>
    </source>
</reference>
<accession>Q92EU0</accession>
<keyword id="KW-0319">Glycerol metabolism</keyword>
<keyword id="KW-0472">Membrane</keyword>
<keyword id="KW-0812">Transmembrane</keyword>
<keyword id="KW-1133">Transmembrane helix</keyword>
<keyword id="KW-0813">Transport</keyword>
<name>Y368_LISIN</name>
<evidence type="ECO:0000255" key="1"/>
<evidence type="ECO:0000256" key="2">
    <source>
        <dbReference type="SAM" id="MobiDB-lite"/>
    </source>
</evidence>
<evidence type="ECO:0000269" key="3">
    <source>
    </source>
</evidence>
<evidence type="ECO:0000305" key="4">
    <source>
    </source>
</evidence>
<evidence type="ECO:0000312" key="5">
    <source>
        <dbReference type="EMBL" id="CAC95601.1"/>
    </source>
</evidence>
<gene>
    <name evidence="5" type="ordered locus">lin0368</name>
</gene>
<dbReference type="EMBL" id="AL596164">
    <property type="protein sequence ID" value="CAC95601.1"/>
    <property type="molecule type" value="Genomic_DNA"/>
</dbReference>
<dbReference type="PIR" id="AI1478">
    <property type="entry name" value="AI1478"/>
</dbReference>
<dbReference type="RefSeq" id="WP_003760281.1">
    <property type="nucleotide sequence ID" value="NC_003212.1"/>
</dbReference>
<dbReference type="STRING" id="272626.gene:17564695"/>
<dbReference type="GeneID" id="93233818"/>
<dbReference type="KEGG" id="lin:lin0368"/>
<dbReference type="eggNOG" id="ENOG5032S74">
    <property type="taxonomic scope" value="Bacteria"/>
</dbReference>
<dbReference type="HOGENOM" id="CLU_149873_0_0_9"/>
<dbReference type="OrthoDB" id="1908850at2"/>
<dbReference type="Proteomes" id="UP000002513">
    <property type="component" value="Chromosome"/>
</dbReference>
<dbReference type="GO" id="GO:0016020">
    <property type="term" value="C:membrane"/>
    <property type="evidence" value="ECO:0007669"/>
    <property type="project" value="UniProtKB-SubCell"/>
</dbReference>
<dbReference type="GO" id="GO:0006071">
    <property type="term" value="P:glycerol metabolic process"/>
    <property type="evidence" value="ECO:0007669"/>
    <property type="project" value="UniProtKB-KW"/>
</dbReference>
<dbReference type="InterPro" id="IPR054200">
    <property type="entry name" value="DUF6905"/>
</dbReference>
<dbReference type="Pfam" id="PF21846">
    <property type="entry name" value="DUF6905"/>
    <property type="match status" value="1"/>
</dbReference>
<comment type="function">
    <text evidence="4">Could be involved in the glycerol uptake either via facilitated diffusion or active transport.</text>
</comment>
<comment type="subcellular location">
    <subcellularLocation>
        <location evidence="1">Membrane</location>
        <topology evidence="1">Multi-pass membrane protein</topology>
    </subcellularLocation>
</comment>
<comment type="induction">
    <text evidence="3">Repressed by GolR.</text>
</comment>
<sequence length="143" mass="15536">MKFFRGMIGFCIAGMIVMSVWTPLAENYGIFGGYLAAFIIIGPMWFMNHHVGLIENDEDAAFVDMAVGIGICGIMRDVFMRGGGELVSSLPTIGLVAIGAVLAGIVAAAIEKDMARKHEAKQEKTEPGMNIKEEERLNENQLV</sequence>
<feature type="chain" id="PRO_0000439496" description="Putative glycerol transporter Lin0368">
    <location>
        <begin position="1"/>
        <end position="143"/>
    </location>
</feature>
<feature type="transmembrane region" description="Helical" evidence="1">
    <location>
        <begin position="6"/>
        <end position="26"/>
    </location>
</feature>
<feature type="transmembrane region" description="Helical" evidence="1">
    <location>
        <begin position="27"/>
        <end position="47"/>
    </location>
</feature>
<feature type="transmembrane region" description="Helical" evidence="1">
    <location>
        <begin position="60"/>
        <end position="80"/>
    </location>
</feature>
<feature type="transmembrane region" description="Helical" evidence="1">
    <location>
        <begin position="90"/>
        <end position="110"/>
    </location>
</feature>
<feature type="region of interest" description="Disordered" evidence="2">
    <location>
        <begin position="118"/>
        <end position="143"/>
    </location>
</feature>
<protein>
    <recommendedName>
        <fullName evidence="4">Putative glycerol transporter Lin0368</fullName>
    </recommendedName>
</protein>